<comment type="function">
    <text evidence="1">Promotes the exchange of GDP for GTP in EF-1-alpha/GDP, thus allowing the regeneration of EF-1-alpha/GTP that could then be used to form the ternary complex EF-1-alpha/GTP/AAtRNA.</text>
</comment>
<comment type="similarity">
    <text evidence="1">Belongs to the EF-1-beta/EF-1-delta family.</text>
</comment>
<evidence type="ECO:0000255" key="1">
    <source>
        <dbReference type="HAMAP-Rule" id="MF_00043"/>
    </source>
</evidence>
<organism>
    <name type="scientific">Methanobrevibacter smithii (strain ATCC 35061 / DSM 861 / OCM 144 / PS)</name>
    <dbReference type="NCBI Taxonomy" id="420247"/>
    <lineage>
        <taxon>Archaea</taxon>
        <taxon>Methanobacteriati</taxon>
        <taxon>Methanobacteriota</taxon>
        <taxon>Methanomada group</taxon>
        <taxon>Methanobacteria</taxon>
        <taxon>Methanobacteriales</taxon>
        <taxon>Methanobacteriaceae</taxon>
        <taxon>Methanobrevibacter</taxon>
    </lineage>
</organism>
<name>EF1B_METS3</name>
<reference key="1">
    <citation type="journal article" date="2007" name="Proc. Natl. Acad. Sci. U.S.A.">
        <title>Genomic and metabolic adaptations of Methanobrevibacter smithii to the human gut.</title>
        <authorList>
            <person name="Samuel B.S."/>
            <person name="Hansen E.E."/>
            <person name="Manchester J.K."/>
            <person name="Coutinho P.M."/>
            <person name="Henrissat B."/>
            <person name="Fulton R."/>
            <person name="Latreille P."/>
            <person name="Kim K."/>
            <person name="Wilson R.K."/>
            <person name="Gordon J.I."/>
        </authorList>
    </citation>
    <scope>NUCLEOTIDE SEQUENCE [LARGE SCALE GENOMIC DNA]</scope>
    <source>
        <strain>ATCC 35061 / DSM 861 / OCM 144 / PS</strain>
    </source>
</reference>
<gene>
    <name evidence="1" type="primary">ef1b</name>
    <name type="ordered locus">Msm_0602</name>
</gene>
<accession>A5UKS9</accession>
<dbReference type="EMBL" id="CP000678">
    <property type="protein sequence ID" value="ABQ86807.1"/>
    <property type="molecule type" value="Genomic_DNA"/>
</dbReference>
<dbReference type="RefSeq" id="WP_004036554.1">
    <property type="nucleotide sequence ID" value="NZ_CP117965.1"/>
</dbReference>
<dbReference type="SMR" id="A5UKS9"/>
<dbReference type="STRING" id="420247.Msm_0602"/>
<dbReference type="EnsemblBacteria" id="ABQ86807">
    <property type="protein sequence ID" value="ABQ86807"/>
    <property type="gene ID" value="Msm_0602"/>
</dbReference>
<dbReference type="KEGG" id="msi:Msm_0602"/>
<dbReference type="PATRIC" id="fig|420247.28.peg.599"/>
<dbReference type="eggNOG" id="arCOG01988">
    <property type="taxonomic scope" value="Archaea"/>
</dbReference>
<dbReference type="HOGENOM" id="CLU_165896_0_0_2"/>
<dbReference type="Proteomes" id="UP000001992">
    <property type="component" value="Chromosome"/>
</dbReference>
<dbReference type="GO" id="GO:0003746">
    <property type="term" value="F:translation elongation factor activity"/>
    <property type="evidence" value="ECO:0007669"/>
    <property type="project" value="UniProtKB-UniRule"/>
</dbReference>
<dbReference type="CDD" id="cd00292">
    <property type="entry name" value="EF1B"/>
    <property type="match status" value="1"/>
</dbReference>
<dbReference type="Gene3D" id="3.30.70.60">
    <property type="match status" value="1"/>
</dbReference>
<dbReference type="HAMAP" id="MF_00043">
    <property type="entry name" value="EF1_beta"/>
    <property type="match status" value="1"/>
</dbReference>
<dbReference type="InterPro" id="IPR036219">
    <property type="entry name" value="eEF-1beta-like_sf"/>
</dbReference>
<dbReference type="InterPro" id="IPR014038">
    <property type="entry name" value="EF1B_bsu/dsu_GNE"/>
</dbReference>
<dbReference type="InterPro" id="IPR014717">
    <property type="entry name" value="Transl_elong_EF1B/ribsomal_bS6"/>
</dbReference>
<dbReference type="InterPro" id="IPR004542">
    <property type="entry name" value="Transl_elong_EF1B_B_arc"/>
</dbReference>
<dbReference type="NCBIfam" id="TIGR00489">
    <property type="entry name" value="aEF-1_beta"/>
    <property type="match status" value="1"/>
</dbReference>
<dbReference type="NCBIfam" id="NF001670">
    <property type="entry name" value="PRK00435.1"/>
    <property type="match status" value="1"/>
</dbReference>
<dbReference type="PANTHER" id="PTHR39647">
    <property type="entry name" value="ELONGATION FACTOR 1-BETA"/>
    <property type="match status" value="1"/>
</dbReference>
<dbReference type="PANTHER" id="PTHR39647:SF1">
    <property type="entry name" value="ELONGATION FACTOR 1-BETA"/>
    <property type="match status" value="1"/>
</dbReference>
<dbReference type="Pfam" id="PF00736">
    <property type="entry name" value="EF1_GNE"/>
    <property type="match status" value="1"/>
</dbReference>
<dbReference type="PIRSF" id="PIRSF006521">
    <property type="entry name" value="Transl_elong_EF1B_B_arc"/>
    <property type="match status" value="1"/>
</dbReference>
<dbReference type="SMART" id="SM00888">
    <property type="entry name" value="EF1_GNE"/>
    <property type="match status" value="1"/>
</dbReference>
<dbReference type="SUPFAM" id="SSF54984">
    <property type="entry name" value="eEF-1beta-like"/>
    <property type="match status" value="1"/>
</dbReference>
<protein>
    <recommendedName>
        <fullName evidence="1">Elongation factor 1-beta</fullName>
        <shortName evidence="1">EF-1-beta</shortName>
    </recommendedName>
    <alternativeName>
        <fullName evidence="1">aEF-1beta</fullName>
    </alternativeName>
</protein>
<sequence length="89" mass="9544">MGEVVATLKIMPESPDVDLEALKAAIQAAMPAEAEFHKIEEEPIAFGLVALNLIFIIEDGEGGTESTEEAMAKLADVASVEITDTRRLM</sequence>
<feature type="chain" id="PRO_0000366423" description="Elongation factor 1-beta">
    <location>
        <begin position="1"/>
        <end position="89"/>
    </location>
</feature>
<keyword id="KW-0251">Elongation factor</keyword>
<keyword id="KW-0648">Protein biosynthesis</keyword>
<proteinExistence type="inferred from homology"/>